<name>RL25_AZOC5</name>
<organism>
    <name type="scientific">Azorhizobium caulinodans (strain ATCC 43989 / DSM 5975 / JCM 20966 / LMG 6465 / NBRC 14845 / NCIMB 13405 / ORS 571)</name>
    <dbReference type="NCBI Taxonomy" id="438753"/>
    <lineage>
        <taxon>Bacteria</taxon>
        <taxon>Pseudomonadati</taxon>
        <taxon>Pseudomonadota</taxon>
        <taxon>Alphaproteobacteria</taxon>
        <taxon>Hyphomicrobiales</taxon>
        <taxon>Xanthobacteraceae</taxon>
        <taxon>Azorhizobium</taxon>
    </lineage>
</organism>
<gene>
    <name evidence="1" type="primary">rplY</name>
    <name evidence="1" type="synonym">ctc</name>
    <name type="ordered locus">AZC_4147</name>
</gene>
<dbReference type="EMBL" id="AP009384">
    <property type="protein sequence ID" value="BAF90145.1"/>
    <property type="molecule type" value="Genomic_DNA"/>
</dbReference>
<dbReference type="RefSeq" id="WP_012172667.1">
    <property type="nucleotide sequence ID" value="NC_009937.1"/>
</dbReference>
<dbReference type="SMR" id="A8HS67"/>
<dbReference type="STRING" id="438753.AZC_4147"/>
<dbReference type="KEGG" id="azc:AZC_4147"/>
<dbReference type="eggNOG" id="COG1825">
    <property type="taxonomic scope" value="Bacteria"/>
</dbReference>
<dbReference type="HOGENOM" id="CLU_075939_0_0_5"/>
<dbReference type="Proteomes" id="UP000000270">
    <property type="component" value="Chromosome"/>
</dbReference>
<dbReference type="GO" id="GO:0022625">
    <property type="term" value="C:cytosolic large ribosomal subunit"/>
    <property type="evidence" value="ECO:0007669"/>
    <property type="project" value="TreeGrafter"/>
</dbReference>
<dbReference type="GO" id="GO:0008097">
    <property type="term" value="F:5S rRNA binding"/>
    <property type="evidence" value="ECO:0007669"/>
    <property type="project" value="InterPro"/>
</dbReference>
<dbReference type="GO" id="GO:0003735">
    <property type="term" value="F:structural constituent of ribosome"/>
    <property type="evidence" value="ECO:0007669"/>
    <property type="project" value="InterPro"/>
</dbReference>
<dbReference type="GO" id="GO:0006412">
    <property type="term" value="P:translation"/>
    <property type="evidence" value="ECO:0007669"/>
    <property type="project" value="UniProtKB-UniRule"/>
</dbReference>
<dbReference type="CDD" id="cd00495">
    <property type="entry name" value="Ribosomal_L25_TL5_CTC"/>
    <property type="match status" value="1"/>
</dbReference>
<dbReference type="Gene3D" id="2.170.120.20">
    <property type="entry name" value="Ribosomal protein L25, beta domain"/>
    <property type="match status" value="1"/>
</dbReference>
<dbReference type="Gene3D" id="2.40.240.10">
    <property type="entry name" value="Ribosomal Protein L25, Chain P"/>
    <property type="match status" value="1"/>
</dbReference>
<dbReference type="HAMAP" id="MF_01334">
    <property type="entry name" value="Ribosomal_bL25_CTC"/>
    <property type="match status" value="1"/>
</dbReference>
<dbReference type="InterPro" id="IPR020056">
    <property type="entry name" value="Rbsml_bL25/Gln-tRNA_synth_N"/>
</dbReference>
<dbReference type="InterPro" id="IPR011035">
    <property type="entry name" value="Ribosomal_bL25/Gln-tRNA_synth"/>
</dbReference>
<dbReference type="InterPro" id="IPR020057">
    <property type="entry name" value="Ribosomal_bL25_b-dom"/>
</dbReference>
<dbReference type="InterPro" id="IPR037121">
    <property type="entry name" value="Ribosomal_bL25_C"/>
</dbReference>
<dbReference type="InterPro" id="IPR001021">
    <property type="entry name" value="Ribosomal_bL25_long"/>
</dbReference>
<dbReference type="InterPro" id="IPR029751">
    <property type="entry name" value="Ribosomal_L25_dom"/>
</dbReference>
<dbReference type="InterPro" id="IPR020930">
    <property type="entry name" value="Ribosomal_uL5_bac-type"/>
</dbReference>
<dbReference type="NCBIfam" id="TIGR00731">
    <property type="entry name" value="bL25_bact_ctc"/>
    <property type="match status" value="1"/>
</dbReference>
<dbReference type="NCBIfam" id="NF004128">
    <property type="entry name" value="PRK05618.1-2"/>
    <property type="match status" value="1"/>
</dbReference>
<dbReference type="PANTHER" id="PTHR33284">
    <property type="entry name" value="RIBOSOMAL PROTEIN L25/GLN-TRNA SYNTHETASE, ANTI-CODON-BINDING DOMAIN-CONTAINING PROTEIN"/>
    <property type="match status" value="1"/>
</dbReference>
<dbReference type="PANTHER" id="PTHR33284:SF1">
    <property type="entry name" value="RIBOSOMAL PROTEIN L25_GLN-TRNA SYNTHETASE, ANTI-CODON-BINDING DOMAIN-CONTAINING PROTEIN"/>
    <property type="match status" value="1"/>
</dbReference>
<dbReference type="Pfam" id="PF01386">
    <property type="entry name" value="Ribosomal_L25p"/>
    <property type="match status" value="1"/>
</dbReference>
<dbReference type="Pfam" id="PF14693">
    <property type="entry name" value="Ribosomal_TL5_C"/>
    <property type="match status" value="1"/>
</dbReference>
<dbReference type="SUPFAM" id="SSF50715">
    <property type="entry name" value="Ribosomal protein L25-like"/>
    <property type="match status" value="1"/>
</dbReference>
<reference key="1">
    <citation type="submission" date="2007-04" db="EMBL/GenBank/DDBJ databases">
        <title>Complete genome sequence of the nitrogen-fixing bacterium Azorhizobium caulinodans ORS571.</title>
        <authorList>
            <person name="Lee K.B."/>
            <person name="Backer P.D."/>
            <person name="Aono T."/>
            <person name="Liu C.T."/>
            <person name="Suzuki S."/>
            <person name="Suzuki T."/>
            <person name="Kaneko T."/>
            <person name="Yamada M."/>
            <person name="Tabata S."/>
            <person name="Kupfer D.M."/>
            <person name="Najar F.Z."/>
            <person name="Wiley G.B."/>
            <person name="Roe B."/>
            <person name="Binnewies T."/>
            <person name="Ussery D."/>
            <person name="Vereecke D."/>
            <person name="Gevers D."/>
            <person name="Holsters M."/>
            <person name="Oyaizu H."/>
        </authorList>
    </citation>
    <scope>NUCLEOTIDE SEQUENCE [LARGE SCALE GENOMIC DNA]</scope>
    <source>
        <strain>ATCC 43989 / DSM 5975 / JCM 20966 / LMG 6465 / NBRC 14845 / NCIMB 13405 / ORS 571</strain>
    </source>
</reference>
<proteinExistence type="inferred from homology"/>
<evidence type="ECO:0000255" key="1">
    <source>
        <dbReference type="HAMAP-Rule" id="MF_01334"/>
    </source>
</evidence>
<evidence type="ECO:0000305" key="2"/>
<protein>
    <recommendedName>
        <fullName evidence="1">Large ribosomal subunit protein bL25</fullName>
    </recommendedName>
    <alternativeName>
        <fullName evidence="2">50S ribosomal protein L25</fullName>
    </alternativeName>
    <alternativeName>
        <fullName evidence="1">General stress protein CTC</fullName>
    </alternativeName>
</protein>
<accession>A8HS67</accession>
<sequence>MTAIKELKAVARARGGKGAARAERRAGRVPAVIYGEKQEPVTISLGHKEITRIIYAGHFLTTLFEIDVDGVKHRVIPRDYQLDPVKDLPLHVDFLRVSQGASVTVEVPVHFENQDKAPGLKSGGTLNVVAHAVALECPAEAIPDHVVADLTGLEIGDSLHLSKVKLPAGVSSAVTGDDTLATIVAPSGLKEAEADEAAAAAAAAAKA</sequence>
<feature type="chain" id="PRO_1000073294" description="Large ribosomal subunit protein bL25">
    <location>
        <begin position="1"/>
        <end position="207"/>
    </location>
</feature>
<comment type="function">
    <text evidence="1">This is one of the proteins that binds to the 5S RNA in the ribosome where it forms part of the central protuberance.</text>
</comment>
<comment type="subunit">
    <text evidence="1">Part of the 50S ribosomal subunit; part of the 5S rRNA/L5/L18/L25 subcomplex. Contacts the 5S rRNA. Binds to the 5S rRNA independently of L5 and L18.</text>
</comment>
<comment type="similarity">
    <text evidence="1">Belongs to the bacterial ribosomal protein bL25 family. CTC subfamily.</text>
</comment>
<keyword id="KW-1185">Reference proteome</keyword>
<keyword id="KW-0687">Ribonucleoprotein</keyword>
<keyword id="KW-0689">Ribosomal protein</keyword>
<keyword id="KW-0694">RNA-binding</keyword>
<keyword id="KW-0699">rRNA-binding</keyword>